<comment type="function">
    <text evidence="1">Late protein which is a part of a large complex required for early virion morphogenesis. This complex participates in the formation of virosomes and the incorporation of virosomal contents into nascent immature virions (By similarity).</text>
</comment>
<comment type="subunit">
    <text evidence="1">Part of a complex composed of A30, G7, F10 kinase, A15, D2, D3, and J1.</text>
</comment>
<comment type="subcellular location">
    <subcellularLocation>
        <location evidence="1">Host cytoplasm</location>
    </subcellularLocation>
    <subcellularLocation>
        <location evidence="1">Virion</location>
    </subcellularLocation>
    <text evidence="1">Localizes in cytoplasmic virus factories and present in the virion core.</text>
</comment>
<comment type="induction">
    <text>Expressed in the late phase of the viral replicative cycle.</text>
</comment>
<comment type="PTM">
    <text evidence="1">Phosphorylated on serines by F10 kinase, phosphorylation state is regulated by H1 phosphatase.</text>
</comment>
<comment type="PTM">
    <text evidence="1">Undergoes proteolytic processing during morphogenesis, probably required for the transformation of immature virions (IV) into mature virions (MV).</text>
</comment>
<comment type="similarity">
    <text evidence="2">Belongs to the chordopoxvirinae G7 family.</text>
</comment>
<proteinExistence type="evidence at transcript level"/>
<evidence type="ECO:0000250" key="1"/>
<evidence type="ECO:0000305" key="2"/>
<name>G7_VACCC</name>
<gene>
    <name type="ORF">G7L</name>
</gene>
<reference key="1">
    <citation type="journal article" date="1990" name="Virology">
        <title>The complete DNA sequence of vaccinia virus.</title>
        <authorList>
            <person name="Goebel S.J."/>
            <person name="Johnson G.P."/>
            <person name="Perkus M.E."/>
            <person name="Davis S.W."/>
            <person name="Winslow J.P."/>
            <person name="Paoletti E."/>
        </authorList>
    </citation>
    <scope>NUCLEOTIDE SEQUENCE [LARGE SCALE GENOMIC DNA]</scope>
</reference>
<reference key="2">
    <citation type="journal article" date="1990" name="Virology">
        <title>Appendix to 'The complete DNA sequence of vaccinia virus'.</title>
        <authorList>
            <person name="Goebel S.J."/>
            <person name="Johnson G.P."/>
            <person name="Perkus M.E."/>
            <person name="Davis S.W."/>
            <person name="Winslow J.P."/>
            <person name="Paoletti E."/>
        </authorList>
    </citation>
    <scope>NUCLEOTIDE SEQUENCE [LARGE SCALE GENOMIC DNA]</scope>
</reference>
<protein>
    <recommendedName>
        <fullName>Assembly protein G7</fullName>
    </recommendedName>
</protein>
<accession>P21028</accession>
<keyword id="KW-1035">Host cytoplasm</keyword>
<keyword id="KW-0597">Phosphoprotein</keyword>
<keyword id="KW-1185">Reference proteome</keyword>
<keyword id="KW-0946">Virion</keyword>
<sequence>MAAEQRRSTIFDIVSKCIVQSVLRDISINSEYIESKAKQLCYCPASKKESVINGIYNCCESNIEIMDKEQLLKILDNLRCHSAHVCNATDFWRLYNSLKRFTHTTAFFNTCKPTILATLNTLITLILSNKLLYAAEMVEYLENQLDSSNKSMSQELAELLEMKYALINLVQYRILPMIIGEPIIVAGFSGKEPISDYSAEVERLMELPVKTDIVNTTYDFLARKGIDTSNNIAEYIAGLKIEEIEKVEKYLPEVISTIANSNIIKNKKSIFPANINDKQIMECSRMLDTSEKYSKGYKTDGAVTSPLTGNNTITTFIPISASDMQKFTILEYLYIMRVMANNVKKKNVGKNNGGVVMHINSPFKVINLPKC</sequence>
<organism>
    <name type="scientific">Vaccinia virus (strain Copenhagen)</name>
    <name type="common">VACV</name>
    <dbReference type="NCBI Taxonomy" id="10249"/>
    <lineage>
        <taxon>Viruses</taxon>
        <taxon>Varidnaviria</taxon>
        <taxon>Bamfordvirae</taxon>
        <taxon>Nucleocytoviricota</taxon>
        <taxon>Pokkesviricetes</taxon>
        <taxon>Chitovirales</taxon>
        <taxon>Poxviridae</taxon>
        <taxon>Chordopoxvirinae</taxon>
        <taxon>Orthopoxvirus</taxon>
        <taxon>Vaccinia virus</taxon>
    </lineage>
</organism>
<dbReference type="EMBL" id="M35027">
    <property type="protein sequence ID" value="AAA48071.1"/>
    <property type="molecule type" value="Genomic_DNA"/>
</dbReference>
<dbReference type="PIR" id="C42512">
    <property type="entry name" value="C42512"/>
</dbReference>
<dbReference type="Proteomes" id="UP000008269">
    <property type="component" value="Segment"/>
</dbReference>
<dbReference type="GO" id="GO:0030430">
    <property type="term" value="C:host cell cytoplasm"/>
    <property type="evidence" value="ECO:0007669"/>
    <property type="project" value="UniProtKB-SubCell"/>
</dbReference>
<dbReference type="GO" id="GO:0044423">
    <property type="term" value="C:virion component"/>
    <property type="evidence" value="ECO:0007669"/>
    <property type="project" value="UniProtKB-KW"/>
</dbReference>
<dbReference type="InterPro" id="IPR008787">
    <property type="entry name" value="Poxvirus_G7"/>
</dbReference>
<dbReference type="Pfam" id="PF05503">
    <property type="entry name" value="Pox_G7"/>
    <property type="match status" value="1"/>
</dbReference>
<organismHost>
    <name type="scientific">Homo sapiens</name>
    <name type="common">Human</name>
    <dbReference type="NCBI Taxonomy" id="9606"/>
</organismHost>
<feature type="chain" id="PRO_0000099537" description="Assembly protein G7">
    <location>
        <begin position="1"/>
        <end position="371"/>
    </location>
</feature>
<feature type="site" description="Cleavage; by I7 protease" evidence="1">
    <location>
        <begin position="187"/>
        <end position="188"/>
    </location>
</feature>
<feature type="site" description="Cleavage; by I7 protease" evidence="1">
    <location>
        <begin position="238"/>
        <end position="239"/>
    </location>
</feature>